<reference key="1">
    <citation type="journal article" date="2002" name="Proc. Natl. Acad. Sci. U.S.A.">
        <title>Complete genome sequence of Clostridium perfringens, an anaerobic flesh-eater.</title>
        <authorList>
            <person name="Shimizu T."/>
            <person name="Ohtani K."/>
            <person name="Hirakawa H."/>
            <person name="Ohshima K."/>
            <person name="Yamashita A."/>
            <person name="Shiba T."/>
            <person name="Ogasawara N."/>
            <person name="Hattori M."/>
            <person name="Kuhara S."/>
            <person name="Hayashi H."/>
        </authorList>
    </citation>
    <scope>NUCLEOTIDE SEQUENCE [LARGE SCALE GENOMIC DNA]</scope>
    <source>
        <strain>13 / Type A</strain>
    </source>
</reference>
<comment type="function">
    <text evidence="1">Catalyzes the synthesis of the hydroxymethylpyrimidine phosphate (HMP-P) moiety of thiamine from aminoimidazole ribotide (AIR) in a radical S-adenosyl-L-methionine (SAM)-dependent reaction.</text>
</comment>
<comment type="catalytic activity">
    <reaction evidence="1">
        <text>5-amino-1-(5-phospho-beta-D-ribosyl)imidazole + S-adenosyl-L-methionine = 4-amino-2-methyl-5-(phosphooxymethyl)pyrimidine + CO + 5'-deoxyadenosine + formate + L-methionine + 3 H(+)</text>
        <dbReference type="Rhea" id="RHEA:24840"/>
        <dbReference type="ChEBI" id="CHEBI:15378"/>
        <dbReference type="ChEBI" id="CHEBI:15740"/>
        <dbReference type="ChEBI" id="CHEBI:17245"/>
        <dbReference type="ChEBI" id="CHEBI:17319"/>
        <dbReference type="ChEBI" id="CHEBI:57844"/>
        <dbReference type="ChEBI" id="CHEBI:58354"/>
        <dbReference type="ChEBI" id="CHEBI:59789"/>
        <dbReference type="ChEBI" id="CHEBI:137981"/>
        <dbReference type="EC" id="4.1.99.17"/>
    </reaction>
</comment>
<comment type="cofactor">
    <cofactor evidence="1">
        <name>[4Fe-4S] cluster</name>
        <dbReference type="ChEBI" id="CHEBI:49883"/>
    </cofactor>
    <text evidence="1">Binds 1 [4Fe-4S] cluster per subunit. The cluster is coordinated with 3 cysteines and an exchangeable S-adenosyl-L-methionine.</text>
</comment>
<comment type="pathway">
    <text evidence="1">Cofactor biosynthesis; thiamine diphosphate biosynthesis.</text>
</comment>
<comment type="similarity">
    <text evidence="1">Belongs to the ThiC family.</text>
</comment>
<dbReference type="EC" id="4.1.99.17" evidence="1"/>
<dbReference type="EMBL" id="BA000016">
    <property type="protein sequence ID" value="BAB80385.1"/>
    <property type="molecule type" value="Genomic_DNA"/>
</dbReference>
<dbReference type="RefSeq" id="WP_003456962.1">
    <property type="nucleotide sequence ID" value="NC_003366.1"/>
</dbReference>
<dbReference type="SMR" id="Q8XMK9"/>
<dbReference type="STRING" id="195102.gene:10489940"/>
<dbReference type="GeneID" id="93002984"/>
<dbReference type="KEGG" id="cpe:CPE0679"/>
<dbReference type="HOGENOM" id="CLU_013181_2_2_9"/>
<dbReference type="UniPathway" id="UPA00060"/>
<dbReference type="Proteomes" id="UP000000818">
    <property type="component" value="Chromosome"/>
</dbReference>
<dbReference type="GO" id="GO:0005829">
    <property type="term" value="C:cytosol"/>
    <property type="evidence" value="ECO:0007669"/>
    <property type="project" value="TreeGrafter"/>
</dbReference>
<dbReference type="GO" id="GO:0051539">
    <property type="term" value="F:4 iron, 4 sulfur cluster binding"/>
    <property type="evidence" value="ECO:0007669"/>
    <property type="project" value="UniProtKB-KW"/>
</dbReference>
<dbReference type="GO" id="GO:0016830">
    <property type="term" value="F:carbon-carbon lyase activity"/>
    <property type="evidence" value="ECO:0007669"/>
    <property type="project" value="InterPro"/>
</dbReference>
<dbReference type="GO" id="GO:0008270">
    <property type="term" value="F:zinc ion binding"/>
    <property type="evidence" value="ECO:0007669"/>
    <property type="project" value="UniProtKB-UniRule"/>
</dbReference>
<dbReference type="GO" id="GO:0009228">
    <property type="term" value="P:thiamine biosynthetic process"/>
    <property type="evidence" value="ECO:0007669"/>
    <property type="project" value="UniProtKB-KW"/>
</dbReference>
<dbReference type="GO" id="GO:0009229">
    <property type="term" value="P:thiamine diphosphate biosynthetic process"/>
    <property type="evidence" value="ECO:0007669"/>
    <property type="project" value="UniProtKB-UniRule"/>
</dbReference>
<dbReference type="FunFam" id="3.20.20.540:FF:000001">
    <property type="entry name" value="Phosphomethylpyrimidine synthase"/>
    <property type="match status" value="1"/>
</dbReference>
<dbReference type="Gene3D" id="6.10.250.620">
    <property type="match status" value="1"/>
</dbReference>
<dbReference type="Gene3D" id="3.20.20.540">
    <property type="entry name" value="Radical SAM ThiC family, central domain"/>
    <property type="match status" value="1"/>
</dbReference>
<dbReference type="HAMAP" id="MF_00089">
    <property type="entry name" value="ThiC"/>
    <property type="match status" value="1"/>
</dbReference>
<dbReference type="InterPro" id="IPR037509">
    <property type="entry name" value="ThiC"/>
</dbReference>
<dbReference type="InterPro" id="IPR038521">
    <property type="entry name" value="ThiC/Bza_core_dom"/>
</dbReference>
<dbReference type="InterPro" id="IPR002817">
    <property type="entry name" value="ThiC/BzaA/B"/>
</dbReference>
<dbReference type="NCBIfam" id="NF009895">
    <property type="entry name" value="PRK13352.1"/>
    <property type="match status" value="1"/>
</dbReference>
<dbReference type="NCBIfam" id="TIGR00190">
    <property type="entry name" value="thiC"/>
    <property type="match status" value="1"/>
</dbReference>
<dbReference type="PANTHER" id="PTHR30557:SF1">
    <property type="entry name" value="PHOSPHOMETHYLPYRIMIDINE SYNTHASE, CHLOROPLASTIC"/>
    <property type="match status" value="1"/>
</dbReference>
<dbReference type="PANTHER" id="PTHR30557">
    <property type="entry name" value="THIAMINE BIOSYNTHESIS PROTEIN THIC"/>
    <property type="match status" value="1"/>
</dbReference>
<dbReference type="Pfam" id="PF01964">
    <property type="entry name" value="ThiC_Rad_SAM"/>
    <property type="match status" value="1"/>
</dbReference>
<dbReference type="SFLD" id="SFLDF00407">
    <property type="entry name" value="phosphomethylpyrimidine_syntha"/>
    <property type="match status" value="1"/>
</dbReference>
<dbReference type="SFLD" id="SFLDG01114">
    <property type="entry name" value="phosphomethylpyrimidine_syntha"/>
    <property type="match status" value="1"/>
</dbReference>
<dbReference type="SFLD" id="SFLDS00113">
    <property type="entry name" value="Radical_SAM_Phosphomethylpyrim"/>
    <property type="match status" value="1"/>
</dbReference>
<protein>
    <recommendedName>
        <fullName evidence="1">Phosphomethylpyrimidine synthase</fullName>
        <ecNumber evidence="1">4.1.99.17</ecNumber>
    </recommendedName>
    <alternativeName>
        <fullName evidence="1">Hydroxymethylpyrimidine phosphate synthase</fullName>
        <shortName evidence="1">HMP-P synthase</shortName>
        <shortName evidence="1">HMP-phosphate synthase</shortName>
        <shortName evidence="1">HMPP synthase</shortName>
    </alternativeName>
    <alternativeName>
        <fullName evidence="1">Thiamine biosynthesis protein ThiC</fullName>
    </alternativeName>
</protein>
<organism>
    <name type="scientific">Clostridium perfringens (strain 13 / Type A)</name>
    <dbReference type="NCBI Taxonomy" id="195102"/>
    <lineage>
        <taxon>Bacteria</taxon>
        <taxon>Bacillati</taxon>
        <taxon>Bacillota</taxon>
        <taxon>Clostridia</taxon>
        <taxon>Eubacteriales</taxon>
        <taxon>Clostridiaceae</taxon>
        <taxon>Clostridium</taxon>
    </lineage>
</organism>
<gene>
    <name evidence="1" type="primary">thiC</name>
    <name type="ordered locus">CPE0679</name>
</gene>
<keyword id="KW-0004">4Fe-4S</keyword>
<keyword id="KW-0408">Iron</keyword>
<keyword id="KW-0411">Iron-sulfur</keyword>
<keyword id="KW-0456">Lyase</keyword>
<keyword id="KW-0479">Metal-binding</keyword>
<keyword id="KW-1185">Reference proteome</keyword>
<keyword id="KW-0949">S-adenosyl-L-methionine</keyword>
<keyword id="KW-0784">Thiamine biosynthesis</keyword>
<keyword id="KW-0862">Zinc</keyword>
<proteinExistence type="inferred from homology"/>
<accession>Q8XMK9</accession>
<sequence length="436" mass="48718">MNYTTQMDAAKKGIITKEMQVVSEKEGINIETLMNLMAEGKIVIPANKNHKSISAEGVGQGLRTKINVNLGISKDCANIELELEKVKKAIDMNAESIMDLSNYGKTYDFRKRLVEVSTAMIGTVPMYDVVGFYDKELKDITVDEFFEVVEKHAKDGVDFVTIHAGLNRETIETFRRNKRLTNIVSRGGSLLFAWMELNNRENPFYEYFDRLLDICEKYDLTLSLGDACRPGSIADATDAVQIKELITLGELTKRAWERNVQVIIEGPGHMAMNEIEANVLLEKKLCHGAPFYVLGPIVTDIAPGYDHITSAIGGAMAASYGADFLCYVTPAEHLRLPNLEDVREGIVATKIAAHAADIAKGISGARDIDNKMSDARKRLDWDEMFSLAIDSEKAIRYRKESTPEHKDSCTMCGKMCSIRNMNKILEGKDINLLRED</sequence>
<name>THIC_CLOPE</name>
<feature type="chain" id="PRO_0000152797" description="Phosphomethylpyrimidine synthase">
    <location>
        <begin position="1"/>
        <end position="436"/>
    </location>
</feature>
<feature type="binding site" evidence="1">
    <location>
        <position position="69"/>
    </location>
    <ligand>
        <name>substrate</name>
    </ligand>
</feature>
<feature type="binding site" evidence="1">
    <location>
        <position position="98"/>
    </location>
    <ligand>
        <name>substrate</name>
    </ligand>
</feature>
<feature type="binding site" evidence="1">
    <location>
        <position position="127"/>
    </location>
    <ligand>
        <name>substrate</name>
    </ligand>
</feature>
<feature type="binding site" evidence="1">
    <location>
        <position position="163"/>
    </location>
    <ligand>
        <name>substrate</name>
    </ligand>
</feature>
<feature type="binding site" evidence="1">
    <location>
        <begin position="185"/>
        <end position="187"/>
    </location>
    <ligand>
        <name>substrate</name>
    </ligand>
</feature>
<feature type="binding site" evidence="1">
    <location>
        <begin position="226"/>
        <end position="229"/>
    </location>
    <ligand>
        <name>substrate</name>
    </ligand>
</feature>
<feature type="binding site" evidence="1">
    <location>
        <position position="265"/>
    </location>
    <ligand>
        <name>substrate</name>
    </ligand>
</feature>
<feature type="binding site" evidence="1">
    <location>
        <position position="269"/>
    </location>
    <ligand>
        <name>Zn(2+)</name>
        <dbReference type="ChEBI" id="CHEBI:29105"/>
    </ligand>
</feature>
<feature type="binding site" evidence="1">
    <location>
        <position position="292"/>
    </location>
    <ligand>
        <name>substrate</name>
    </ligand>
</feature>
<feature type="binding site" evidence="1">
    <location>
        <position position="333"/>
    </location>
    <ligand>
        <name>Zn(2+)</name>
        <dbReference type="ChEBI" id="CHEBI:29105"/>
    </ligand>
</feature>
<feature type="binding site" evidence="1">
    <location>
        <position position="409"/>
    </location>
    <ligand>
        <name>[4Fe-4S] cluster</name>
        <dbReference type="ChEBI" id="CHEBI:49883"/>
        <note>4Fe-4S-S-AdoMet</note>
    </ligand>
</feature>
<feature type="binding site" evidence="1">
    <location>
        <position position="412"/>
    </location>
    <ligand>
        <name>[4Fe-4S] cluster</name>
        <dbReference type="ChEBI" id="CHEBI:49883"/>
        <note>4Fe-4S-S-AdoMet</note>
    </ligand>
</feature>
<feature type="binding site" evidence="1">
    <location>
        <position position="416"/>
    </location>
    <ligand>
        <name>[4Fe-4S] cluster</name>
        <dbReference type="ChEBI" id="CHEBI:49883"/>
        <note>4Fe-4S-S-AdoMet</note>
    </ligand>
</feature>
<evidence type="ECO:0000255" key="1">
    <source>
        <dbReference type="HAMAP-Rule" id="MF_00089"/>
    </source>
</evidence>